<feature type="chain" id="PRO_1000004516" description="ATP phosphoribosyltransferase">
    <location>
        <begin position="1"/>
        <end position="304"/>
    </location>
</feature>
<comment type="function">
    <text evidence="1">Catalyzes the condensation of ATP and 5-phosphoribose 1-diphosphate to form N'-(5'-phosphoribosyl)-ATP (PR-ATP). Has a crucial role in the pathway because the rate of histidine biosynthesis seems to be controlled primarily by regulation of HisG enzymatic activity.</text>
</comment>
<comment type="catalytic activity">
    <reaction evidence="1">
        <text>1-(5-phospho-beta-D-ribosyl)-ATP + diphosphate = 5-phospho-alpha-D-ribose 1-diphosphate + ATP</text>
        <dbReference type="Rhea" id="RHEA:18473"/>
        <dbReference type="ChEBI" id="CHEBI:30616"/>
        <dbReference type="ChEBI" id="CHEBI:33019"/>
        <dbReference type="ChEBI" id="CHEBI:58017"/>
        <dbReference type="ChEBI" id="CHEBI:73183"/>
        <dbReference type="EC" id="2.4.2.17"/>
    </reaction>
</comment>
<comment type="cofactor">
    <cofactor evidence="1">
        <name>Mg(2+)</name>
        <dbReference type="ChEBI" id="CHEBI:18420"/>
    </cofactor>
</comment>
<comment type="activity regulation">
    <text evidence="1">Feedback inhibited by histidine.</text>
</comment>
<comment type="pathway">
    <text evidence="1">Amino-acid biosynthesis; L-histidine biosynthesis; L-histidine from 5-phospho-alpha-D-ribose 1-diphosphate: step 1/9.</text>
</comment>
<comment type="subcellular location">
    <subcellularLocation>
        <location evidence="1">Cytoplasm</location>
    </subcellularLocation>
</comment>
<comment type="similarity">
    <text evidence="1">Belongs to the ATP phosphoribosyltransferase family. Long subfamily.</text>
</comment>
<gene>
    <name evidence="1" type="primary">hisG</name>
    <name type="ordered locus">XOO2118</name>
</gene>
<name>HIS1_XANOM</name>
<reference key="1">
    <citation type="journal article" date="2005" name="Jpn. Agric. Res. Q.">
        <title>Genome sequence of Xanthomonas oryzae pv. oryzae suggests contribution of large numbers of effector genes and insertion sequences to its race diversity.</title>
        <authorList>
            <person name="Ochiai H."/>
            <person name="Inoue Y."/>
            <person name="Takeya M."/>
            <person name="Sasaki A."/>
            <person name="Kaku H."/>
        </authorList>
    </citation>
    <scope>NUCLEOTIDE SEQUENCE [LARGE SCALE GENOMIC DNA]</scope>
    <source>
        <strain>MAFF 311018</strain>
    </source>
</reference>
<accession>Q2P3K4</accession>
<keyword id="KW-0028">Amino-acid biosynthesis</keyword>
<keyword id="KW-0067">ATP-binding</keyword>
<keyword id="KW-0963">Cytoplasm</keyword>
<keyword id="KW-0328">Glycosyltransferase</keyword>
<keyword id="KW-0368">Histidine biosynthesis</keyword>
<keyword id="KW-0460">Magnesium</keyword>
<keyword id="KW-0479">Metal-binding</keyword>
<keyword id="KW-0547">Nucleotide-binding</keyword>
<keyword id="KW-0808">Transferase</keyword>
<evidence type="ECO:0000255" key="1">
    <source>
        <dbReference type="HAMAP-Rule" id="MF_00079"/>
    </source>
</evidence>
<dbReference type="EC" id="2.4.2.17" evidence="1"/>
<dbReference type="EMBL" id="AP008229">
    <property type="protein sequence ID" value="BAE68873.1"/>
    <property type="molecule type" value="Genomic_DNA"/>
</dbReference>
<dbReference type="RefSeq" id="WP_011258941.1">
    <property type="nucleotide sequence ID" value="NC_007705.1"/>
</dbReference>
<dbReference type="SMR" id="Q2P3K4"/>
<dbReference type="KEGG" id="xom:XOO2118"/>
<dbReference type="HOGENOM" id="CLU_038115_1_0_6"/>
<dbReference type="UniPathway" id="UPA00031">
    <property type="reaction ID" value="UER00006"/>
</dbReference>
<dbReference type="GO" id="GO:0005737">
    <property type="term" value="C:cytoplasm"/>
    <property type="evidence" value="ECO:0007669"/>
    <property type="project" value="UniProtKB-SubCell"/>
</dbReference>
<dbReference type="GO" id="GO:0005524">
    <property type="term" value="F:ATP binding"/>
    <property type="evidence" value="ECO:0007669"/>
    <property type="project" value="UniProtKB-KW"/>
</dbReference>
<dbReference type="GO" id="GO:0003879">
    <property type="term" value="F:ATP phosphoribosyltransferase activity"/>
    <property type="evidence" value="ECO:0007669"/>
    <property type="project" value="UniProtKB-UniRule"/>
</dbReference>
<dbReference type="GO" id="GO:0000287">
    <property type="term" value="F:magnesium ion binding"/>
    <property type="evidence" value="ECO:0007669"/>
    <property type="project" value="UniProtKB-UniRule"/>
</dbReference>
<dbReference type="GO" id="GO:0000105">
    <property type="term" value="P:L-histidine biosynthetic process"/>
    <property type="evidence" value="ECO:0007669"/>
    <property type="project" value="UniProtKB-UniRule"/>
</dbReference>
<dbReference type="CDD" id="cd13592">
    <property type="entry name" value="PBP2_HisGL2"/>
    <property type="match status" value="1"/>
</dbReference>
<dbReference type="FunFam" id="3.40.190.10:FF:000008">
    <property type="entry name" value="ATP phosphoribosyltransferase"/>
    <property type="match status" value="1"/>
</dbReference>
<dbReference type="Gene3D" id="3.30.70.120">
    <property type="match status" value="1"/>
</dbReference>
<dbReference type="Gene3D" id="3.40.190.10">
    <property type="entry name" value="Periplasmic binding protein-like II"/>
    <property type="match status" value="2"/>
</dbReference>
<dbReference type="HAMAP" id="MF_00079">
    <property type="entry name" value="HisG_Long"/>
    <property type="match status" value="1"/>
</dbReference>
<dbReference type="InterPro" id="IPR020621">
    <property type="entry name" value="ATP-PRT_HisG_long"/>
</dbReference>
<dbReference type="InterPro" id="IPR013820">
    <property type="entry name" value="ATP_PRibTrfase_cat"/>
</dbReference>
<dbReference type="InterPro" id="IPR018198">
    <property type="entry name" value="ATP_PRibTrfase_CS"/>
</dbReference>
<dbReference type="InterPro" id="IPR001348">
    <property type="entry name" value="ATP_PRibTrfase_HisG"/>
</dbReference>
<dbReference type="InterPro" id="IPR013115">
    <property type="entry name" value="HisG_C"/>
</dbReference>
<dbReference type="InterPro" id="IPR015867">
    <property type="entry name" value="N-reg_PII/ATP_PRibTrfase_C"/>
</dbReference>
<dbReference type="NCBIfam" id="TIGR00070">
    <property type="entry name" value="hisG"/>
    <property type="match status" value="1"/>
</dbReference>
<dbReference type="NCBIfam" id="TIGR03455">
    <property type="entry name" value="HisG_C-term"/>
    <property type="match status" value="1"/>
</dbReference>
<dbReference type="PANTHER" id="PTHR21403:SF8">
    <property type="entry name" value="ATP PHOSPHORIBOSYLTRANSFERASE"/>
    <property type="match status" value="1"/>
</dbReference>
<dbReference type="PANTHER" id="PTHR21403">
    <property type="entry name" value="ATP PHOSPHORIBOSYLTRANSFERASE ATP-PRTASE"/>
    <property type="match status" value="1"/>
</dbReference>
<dbReference type="Pfam" id="PF01634">
    <property type="entry name" value="HisG"/>
    <property type="match status" value="1"/>
</dbReference>
<dbReference type="Pfam" id="PF08029">
    <property type="entry name" value="HisG_C"/>
    <property type="match status" value="1"/>
</dbReference>
<dbReference type="SUPFAM" id="SSF53850">
    <property type="entry name" value="Periplasmic binding protein-like II"/>
    <property type="match status" value="1"/>
</dbReference>
<dbReference type="PROSITE" id="PS01316">
    <property type="entry name" value="ATP_P_PHORIBOSYLTR"/>
    <property type="match status" value="1"/>
</dbReference>
<organism>
    <name type="scientific">Xanthomonas oryzae pv. oryzae (strain MAFF 311018)</name>
    <dbReference type="NCBI Taxonomy" id="342109"/>
    <lineage>
        <taxon>Bacteria</taxon>
        <taxon>Pseudomonadati</taxon>
        <taxon>Pseudomonadota</taxon>
        <taxon>Gammaproteobacteria</taxon>
        <taxon>Lysobacterales</taxon>
        <taxon>Lysobacteraceae</taxon>
        <taxon>Xanthomonas</taxon>
    </lineage>
</organism>
<proteinExistence type="inferred from homology"/>
<protein>
    <recommendedName>
        <fullName evidence="1">ATP phosphoribosyltransferase</fullName>
        <shortName evidence="1">ATP-PRT</shortName>
        <shortName evidence="1">ATP-PRTase</shortName>
        <ecNumber evidence="1">2.4.2.17</ecNumber>
    </recommendedName>
</protein>
<sequence length="304" mass="32793">MSASTAAPARDRLRIAIQKSGRLAEPARSLLAACGLSWRQSRDKLFCYGESLPVDLLLVRDDDIPGLIADGVCDLGIVGQNELEEQAAERRGNGLPAAYHAVRGVGFGQCRLMLAVPEEWDWQGVAQLAGKRIATSYPAILADWLERQGIEATVVELSGSVEIAPRLGTADLICDLVSSGATLAANQLKPVELVMESEAVLAGAVREPADARAGLLAMLLRRMDGVLKLRDSKLLMFRADQDNVDALRRLLPDADPLVQLPDDGNGVLRLQTMCHGAVTWQRLEELERAGAQGLMVLTVERSLA</sequence>